<comment type="function">
    <text evidence="2">Plays an important role in fat metabolism. It preferentially splits the esters of long-chain fatty acids at positions 1 and 3, producing mainly 2-monoacylglycerol and free fatty acids, and shows considerably higher activity against insoluble emulsified substrates than against soluble ones.</text>
</comment>
<comment type="catalytic activity">
    <reaction evidence="2">
        <text>a triacylglycerol + H2O = a diacylglycerol + a fatty acid + H(+)</text>
        <dbReference type="Rhea" id="RHEA:12044"/>
        <dbReference type="ChEBI" id="CHEBI:15377"/>
        <dbReference type="ChEBI" id="CHEBI:15378"/>
        <dbReference type="ChEBI" id="CHEBI:17855"/>
        <dbReference type="ChEBI" id="CHEBI:18035"/>
        <dbReference type="ChEBI" id="CHEBI:28868"/>
        <dbReference type="EC" id="3.1.1.3"/>
    </reaction>
    <physiologicalReaction direction="left-to-right" evidence="2">
        <dbReference type="Rhea" id="RHEA:12045"/>
    </physiologicalReaction>
</comment>
<comment type="catalytic activity">
    <reaction evidence="2">
        <text>1,2,3-tributanoylglycerol + H2O = dibutanoylglycerol + butanoate + H(+)</text>
        <dbReference type="Rhea" id="RHEA:40475"/>
        <dbReference type="ChEBI" id="CHEBI:15377"/>
        <dbReference type="ChEBI" id="CHEBI:15378"/>
        <dbReference type="ChEBI" id="CHEBI:17968"/>
        <dbReference type="ChEBI" id="CHEBI:35020"/>
        <dbReference type="ChEBI" id="CHEBI:76478"/>
    </reaction>
    <physiologicalReaction direction="left-to-right" evidence="2">
        <dbReference type="Rhea" id="RHEA:40476"/>
    </physiologicalReaction>
</comment>
<comment type="catalytic activity">
    <reaction evidence="2">
        <text>1,2,3-tri-(9Z-octadecenoyl)-glycerol + H2O = di-(9Z)-octadecenoylglycerol + (9Z)-octadecenoate + H(+)</text>
        <dbReference type="Rhea" id="RHEA:38575"/>
        <dbReference type="ChEBI" id="CHEBI:15377"/>
        <dbReference type="ChEBI" id="CHEBI:15378"/>
        <dbReference type="ChEBI" id="CHEBI:30823"/>
        <dbReference type="ChEBI" id="CHEBI:53753"/>
        <dbReference type="ChEBI" id="CHEBI:75945"/>
    </reaction>
    <physiologicalReaction direction="left-to-right" evidence="2">
        <dbReference type="Rhea" id="RHEA:38576"/>
    </physiologicalReaction>
</comment>
<comment type="catalytic activity">
    <reaction evidence="2">
        <text>all-trans-retinyl hexadecanoate + H2O = all-trans-retinol + hexadecanoate + H(+)</text>
        <dbReference type="Rhea" id="RHEA:13933"/>
        <dbReference type="ChEBI" id="CHEBI:7896"/>
        <dbReference type="ChEBI" id="CHEBI:15377"/>
        <dbReference type="ChEBI" id="CHEBI:15378"/>
        <dbReference type="ChEBI" id="CHEBI:17336"/>
        <dbReference type="ChEBI" id="CHEBI:17616"/>
    </reaction>
    <physiologicalReaction direction="left-to-right" evidence="2">
        <dbReference type="Rhea" id="RHEA:13934"/>
    </physiologicalReaction>
</comment>
<comment type="catalytic activity">
    <reaction evidence="2">
        <text>1,2-di-(9Z-octadecenoyl)-glycerol + H2O = (9Z-octadecenoyl)-glycerol + (9Z)-octadecenoate + H(+)</text>
        <dbReference type="Rhea" id="RHEA:38455"/>
        <dbReference type="ChEBI" id="CHEBI:15377"/>
        <dbReference type="ChEBI" id="CHEBI:15378"/>
        <dbReference type="ChEBI" id="CHEBI:30823"/>
        <dbReference type="ChEBI" id="CHEBI:52323"/>
        <dbReference type="ChEBI" id="CHEBI:75937"/>
    </reaction>
    <physiologicalReaction direction="left-to-right" evidence="2">
        <dbReference type="Rhea" id="RHEA:38456"/>
    </physiologicalReaction>
</comment>
<comment type="activity regulation">
    <text evidence="2">Inhibited by bile salts, is reactivated by (pro)colipase/CLPS.</text>
</comment>
<comment type="subunit">
    <text evidence="2">Forms a 1:1 stoichiometric complex with (pro)colipase/CLPS.</text>
</comment>
<comment type="subcellular location">
    <subcellularLocation>
        <location evidence="2">Secreted</location>
    </subcellularLocation>
</comment>
<comment type="similarity">
    <text evidence="5">Belongs to the AB hydrolase superfamily. Lipase family.</text>
</comment>
<gene>
    <name type="primary">PNLIP</name>
</gene>
<dbReference type="EC" id="3.1.1.3" evidence="2"/>
<dbReference type="EMBL" id="X77403">
    <property type="protein sequence ID" value="CAA54585.1"/>
    <property type="molecule type" value="mRNA"/>
</dbReference>
<dbReference type="PIR" id="S41084">
    <property type="entry name" value="S41084"/>
</dbReference>
<dbReference type="RefSeq" id="NP_001166472.1">
    <property type="nucleotide sequence ID" value="NM_001173001.1"/>
</dbReference>
<dbReference type="SMR" id="P50903"/>
<dbReference type="FunCoup" id="P50903">
    <property type="interactions" value="299"/>
</dbReference>
<dbReference type="STRING" id="10141.ENSCPOP00000012083"/>
<dbReference type="ESTHER" id="cavpo-1plip">
    <property type="family name" value="Pancreatic_lipase"/>
</dbReference>
<dbReference type="GlyCosmos" id="P50903">
    <property type="glycosylation" value="3 sites, No reported glycans"/>
</dbReference>
<dbReference type="GeneID" id="100135601"/>
<dbReference type="KEGG" id="cpoc:100135601"/>
<dbReference type="CTD" id="5406"/>
<dbReference type="eggNOG" id="ENOG502QUK7">
    <property type="taxonomic scope" value="Eukaryota"/>
</dbReference>
<dbReference type="InParanoid" id="P50903"/>
<dbReference type="OrthoDB" id="199913at2759"/>
<dbReference type="Proteomes" id="UP000005447">
    <property type="component" value="Unassembled WGS sequence"/>
</dbReference>
<dbReference type="GO" id="GO:0005615">
    <property type="term" value="C:extracellular space"/>
    <property type="evidence" value="ECO:0007669"/>
    <property type="project" value="TreeGrafter"/>
</dbReference>
<dbReference type="GO" id="GO:0047376">
    <property type="term" value="F:all-trans-retinyl-palmitate hydrolase, all-trans-retinol forming activity"/>
    <property type="evidence" value="ECO:0007669"/>
    <property type="project" value="RHEA"/>
</dbReference>
<dbReference type="GO" id="GO:0004465">
    <property type="term" value="F:lipoprotein lipase activity"/>
    <property type="evidence" value="ECO:0007669"/>
    <property type="project" value="TreeGrafter"/>
</dbReference>
<dbReference type="GO" id="GO:0046872">
    <property type="term" value="F:metal ion binding"/>
    <property type="evidence" value="ECO:0007669"/>
    <property type="project" value="UniProtKB-KW"/>
</dbReference>
<dbReference type="GO" id="GO:0004806">
    <property type="term" value="F:triacylglycerol lipase activity"/>
    <property type="evidence" value="ECO:0000250"/>
    <property type="project" value="UniProtKB"/>
</dbReference>
<dbReference type="GO" id="GO:0016042">
    <property type="term" value="P:lipid catabolic process"/>
    <property type="evidence" value="ECO:0007669"/>
    <property type="project" value="UniProtKB-KW"/>
</dbReference>
<dbReference type="CDD" id="cd00707">
    <property type="entry name" value="Pancreat_lipase_like"/>
    <property type="match status" value="1"/>
</dbReference>
<dbReference type="CDD" id="cd01759">
    <property type="entry name" value="PLAT_PL"/>
    <property type="match status" value="1"/>
</dbReference>
<dbReference type="FunFam" id="3.40.50.1820:FF:000033">
    <property type="entry name" value="Pancreatic triacylglycerol lipase"/>
    <property type="match status" value="1"/>
</dbReference>
<dbReference type="FunFam" id="2.60.60.20:FF:000003">
    <property type="entry name" value="Triacylglycerol lipase"/>
    <property type="match status" value="1"/>
</dbReference>
<dbReference type="Gene3D" id="3.40.50.1820">
    <property type="entry name" value="alpha/beta hydrolase"/>
    <property type="match status" value="1"/>
</dbReference>
<dbReference type="Gene3D" id="2.60.60.20">
    <property type="entry name" value="PLAT/LH2 domain"/>
    <property type="match status" value="1"/>
</dbReference>
<dbReference type="InterPro" id="IPR029058">
    <property type="entry name" value="AB_hydrolase_fold"/>
</dbReference>
<dbReference type="InterPro" id="IPR013818">
    <property type="entry name" value="Lipase"/>
</dbReference>
<dbReference type="InterPro" id="IPR016272">
    <property type="entry name" value="Lipase_LIPH"/>
</dbReference>
<dbReference type="InterPro" id="IPR033906">
    <property type="entry name" value="Lipase_N"/>
</dbReference>
<dbReference type="InterPro" id="IPR002331">
    <property type="entry name" value="Lipase_panc"/>
</dbReference>
<dbReference type="InterPro" id="IPR001024">
    <property type="entry name" value="PLAT/LH2_dom"/>
</dbReference>
<dbReference type="InterPro" id="IPR036392">
    <property type="entry name" value="PLAT/LH2_dom_sf"/>
</dbReference>
<dbReference type="InterPro" id="IPR000734">
    <property type="entry name" value="TAG_lipase"/>
</dbReference>
<dbReference type="PANTHER" id="PTHR11610">
    <property type="entry name" value="LIPASE"/>
    <property type="match status" value="1"/>
</dbReference>
<dbReference type="PANTHER" id="PTHR11610:SF147">
    <property type="entry name" value="PANCREATIC TRIACYLGLYCEROL LIPASE"/>
    <property type="match status" value="1"/>
</dbReference>
<dbReference type="Pfam" id="PF00151">
    <property type="entry name" value="Lipase"/>
    <property type="match status" value="1"/>
</dbReference>
<dbReference type="Pfam" id="PF01477">
    <property type="entry name" value="PLAT"/>
    <property type="match status" value="1"/>
</dbReference>
<dbReference type="PIRSF" id="PIRSF000865">
    <property type="entry name" value="Lipoprotein_lipase_LIPH"/>
    <property type="match status" value="1"/>
</dbReference>
<dbReference type="PRINTS" id="PR00823">
    <property type="entry name" value="PANCLIPASE"/>
</dbReference>
<dbReference type="PRINTS" id="PR00821">
    <property type="entry name" value="TAGLIPASE"/>
</dbReference>
<dbReference type="SMART" id="SM00308">
    <property type="entry name" value="LH2"/>
    <property type="match status" value="1"/>
</dbReference>
<dbReference type="SUPFAM" id="SSF53474">
    <property type="entry name" value="alpha/beta-Hydrolases"/>
    <property type="match status" value="1"/>
</dbReference>
<dbReference type="SUPFAM" id="SSF49723">
    <property type="entry name" value="Lipase/lipooxygenase domain (PLAT/LH2 domain)"/>
    <property type="match status" value="1"/>
</dbReference>
<dbReference type="PROSITE" id="PS00120">
    <property type="entry name" value="LIPASE_SER"/>
    <property type="match status" value="1"/>
</dbReference>
<dbReference type="PROSITE" id="PS50095">
    <property type="entry name" value="PLAT"/>
    <property type="match status" value="1"/>
</dbReference>
<sequence length="465" mass="51858">MLLLWILSLFLETVAGGEVCFDRLGCFSDNKPWAGTSERPRKGLPWDPSAINVRFLLYTNENPNNYQRITADSSVIRSSDFKTDRKTRFIIHGFIDKGEENWLADLCKALFQVESVNCICVDWRGGSRTLYSQASQNIQVVGAEVAYLINFLQSQLDYPPSSVHIIGHSLGSHAAGEAGRRTNGAIGRITGLDPAEPYFQYTPEIVRLDPSDAQFVDVIHTDGNPIIPNLGFGMSQTVGHLDFFPNGGLQMPGCQKNILSQIVDIDGIWEGTRDFAACNHLRSYKYYIDSITNPKGFAGFSCDSYSSFSSNKCFPCATGECPQMGHYADKFPGKTKENFQNFYLNTGDKSNFSRWRYRIAVTLSGQKVTGHVLVSLFGDAGNTKQYEIYRGSLKPGNNHSNEIDSDVDVGDLQKVKFIWYNNVINITLPKVGASRITVTRSDGRVFDFCSQDTVREEVLLTLQPC</sequence>
<name>LIPP_CAVPO</name>
<keyword id="KW-0106">Calcium</keyword>
<keyword id="KW-1015">Disulfide bond</keyword>
<keyword id="KW-0325">Glycoprotein</keyword>
<keyword id="KW-0378">Hydrolase</keyword>
<keyword id="KW-0442">Lipid degradation</keyword>
<keyword id="KW-0443">Lipid metabolism</keyword>
<keyword id="KW-0479">Metal-binding</keyword>
<keyword id="KW-1185">Reference proteome</keyword>
<keyword id="KW-0964">Secreted</keyword>
<keyword id="KW-0732">Signal</keyword>
<organism>
    <name type="scientific">Cavia porcellus</name>
    <name type="common">Guinea pig</name>
    <dbReference type="NCBI Taxonomy" id="10141"/>
    <lineage>
        <taxon>Eukaryota</taxon>
        <taxon>Metazoa</taxon>
        <taxon>Chordata</taxon>
        <taxon>Craniata</taxon>
        <taxon>Vertebrata</taxon>
        <taxon>Euteleostomi</taxon>
        <taxon>Mammalia</taxon>
        <taxon>Eutheria</taxon>
        <taxon>Euarchontoglires</taxon>
        <taxon>Glires</taxon>
        <taxon>Rodentia</taxon>
        <taxon>Hystricomorpha</taxon>
        <taxon>Caviidae</taxon>
        <taxon>Cavia</taxon>
    </lineage>
</organism>
<evidence type="ECO:0000250" key="1"/>
<evidence type="ECO:0000250" key="2">
    <source>
        <dbReference type="UniProtKB" id="P16233"/>
    </source>
</evidence>
<evidence type="ECO:0000255" key="3"/>
<evidence type="ECO:0000255" key="4">
    <source>
        <dbReference type="PROSITE-ProRule" id="PRU00152"/>
    </source>
</evidence>
<evidence type="ECO:0000305" key="5"/>
<accession>P50903</accession>
<proteinExistence type="evidence at transcript level"/>
<feature type="signal peptide" evidence="3">
    <location>
        <begin position="1"/>
        <end position="16"/>
    </location>
</feature>
<feature type="chain" id="PRO_0000017783" description="Pancreatic triacylglycerol lipase">
    <location>
        <begin position="17"/>
        <end position="465"/>
    </location>
</feature>
<feature type="domain" description="PLAT" evidence="4">
    <location>
        <begin position="355"/>
        <end position="465"/>
    </location>
</feature>
<feature type="active site" description="Nucleophile">
    <location>
        <position position="169"/>
    </location>
</feature>
<feature type="active site" description="Charge relay system">
    <location>
        <position position="193"/>
    </location>
</feature>
<feature type="active site" description="Charge relay system">
    <location>
        <position position="280"/>
    </location>
</feature>
<feature type="binding site" evidence="1">
    <location>
        <position position="204"/>
    </location>
    <ligand>
        <name>Ca(2+)</name>
        <dbReference type="ChEBI" id="CHEBI:29108"/>
    </ligand>
</feature>
<feature type="binding site" evidence="1">
    <location>
        <position position="207"/>
    </location>
    <ligand>
        <name>Ca(2+)</name>
        <dbReference type="ChEBI" id="CHEBI:29108"/>
    </ligand>
</feature>
<feature type="binding site" evidence="1">
    <location>
        <position position="209"/>
    </location>
    <ligand>
        <name>Ca(2+)</name>
        <dbReference type="ChEBI" id="CHEBI:29108"/>
    </ligand>
</feature>
<feature type="binding site" evidence="1">
    <location>
        <position position="212"/>
    </location>
    <ligand>
        <name>Ca(2+)</name>
        <dbReference type="ChEBI" id="CHEBI:29108"/>
    </ligand>
</feature>
<feature type="glycosylation site" description="N-linked (GlcNAc...) asparagine" evidence="3">
    <location>
        <position position="351"/>
    </location>
</feature>
<feature type="glycosylation site" description="N-linked (GlcNAc...) asparagine" evidence="3">
    <location>
        <position position="398"/>
    </location>
</feature>
<feature type="glycosylation site" description="N-linked (GlcNAc...) asparagine" evidence="3">
    <location>
        <position position="425"/>
    </location>
</feature>
<feature type="disulfide bond" evidence="4">
    <location>
        <begin position="20"/>
        <end position="26"/>
    </location>
</feature>
<feature type="disulfide bond" evidence="4">
    <location>
        <begin position="107"/>
        <end position="118"/>
    </location>
</feature>
<feature type="disulfide bond" evidence="4">
    <location>
        <begin position="254"/>
        <end position="278"/>
    </location>
</feature>
<feature type="disulfide bond" evidence="4">
    <location>
        <begin position="302"/>
        <end position="313"/>
    </location>
</feature>
<feature type="disulfide bond" evidence="4">
    <location>
        <begin position="316"/>
        <end position="321"/>
    </location>
</feature>
<feature type="disulfide bond" evidence="4">
    <location>
        <begin position="449"/>
        <end position="465"/>
    </location>
</feature>
<protein>
    <recommendedName>
        <fullName evidence="5">Pancreatic triacylglycerol lipase</fullName>
        <shortName>PL</shortName>
        <shortName>PTL</shortName>
        <shortName>Pancreatic lipase</shortName>
        <ecNumber evidence="2">3.1.1.3</ecNumber>
    </recommendedName>
</protein>
<reference key="1">
    <citation type="journal article" date="1994" name="FEBS Lett.">
        <title>Cloning of the classical guinea pig pancreatic lipase and comparison with the lipase related protein 2.</title>
        <authorList>
            <person name="Carriere F."/>
            <person name="Thirstrup K."/>
            <person name="Hjorth S."/>
            <person name="Boel E."/>
        </authorList>
    </citation>
    <scope>NUCLEOTIDE SEQUENCE [MRNA]</scope>
    <source>
        <tissue>Pancreas</tissue>
    </source>
</reference>